<evidence type="ECO:0000250" key="1"/>
<evidence type="ECO:0000250" key="2">
    <source>
        <dbReference type="UniProtKB" id="P00441"/>
    </source>
</evidence>
<evidence type="ECO:0000250" key="3">
    <source>
        <dbReference type="UniProtKB" id="P00442"/>
    </source>
</evidence>
<evidence type="ECO:0000250" key="4">
    <source>
        <dbReference type="UniProtKB" id="P07632"/>
    </source>
</evidence>
<evidence type="ECO:0000250" key="5">
    <source>
        <dbReference type="UniProtKB" id="P08228"/>
    </source>
</evidence>
<evidence type="ECO:0000305" key="6"/>
<dbReference type="EC" id="1.15.1.1" evidence="2"/>
<dbReference type="EMBL" id="AB087266">
    <property type="protein sequence ID" value="BAC20345.1"/>
    <property type="molecule type" value="mRNA"/>
</dbReference>
<dbReference type="RefSeq" id="NP_001009025.1">
    <property type="nucleotide sequence ID" value="NM_001009025.1"/>
</dbReference>
<dbReference type="BMRB" id="P60052"/>
<dbReference type="SMR" id="P60052"/>
<dbReference type="FunCoup" id="P60052">
    <property type="interactions" value="1564"/>
</dbReference>
<dbReference type="STRING" id="9598.ENSPTRP00000023837"/>
<dbReference type="PaxDb" id="9598-ENSPTRP00000023837"/>
<dbReference type="Ensembl" id="ENSPTRT00000025826.4">
    <property type="protein sequence ID" value="ENSPTRP00000023837.3"/>
    <property type="gene ID" value="ENSPTRG00000013847.6"/>
</dbReference>
<dbReference type="GeneID" id="449637"/>
<dbReference type="KEGG" id="ptr:449637"/>
<dbReference type="CTD" id="6647"/>
<dbReference type="VGNC" id="VGNC:14681">
    <property type="gene designation" value="SOD1"/>
</dbReference>
<dbReference type="eggNOG" id="KOG0441">
    <property type="taxonomic scope" value="Eukaryota"/>
</dbReference>
<dbReference type="GeneTree" id="ENSGT00940000155551"/>
<dbReference type="HOGENOM" id="CLU_056632_4_1_1"/>
<dbReference type="InParanoid" id="P60052"/>
<dbReference type="OMA" id="AQRGFHI"/>
<dbReference type="OrthoDB" id="7881at9604"/>
<dbReference type="TreeFam" id="TF105131"/>
<dbReference type="Proteomes" id="UP000002277">
    <property type="component" value="Chromosome 21"/>
</dbReference>
<dbReference type="Bgee" id="ENSPTRG00000013847">
    <property type="expression patterns" value="Expressed in primary visual cortex and 22 other cell types or tissues"/>
</dbReference>
<dbReference type="GO" id="GO:1904115">
    <property type="term" value="C:axon cytoplasm"/>
    <property type="evidence" value="ECO:0007669"/>
    <property type="project" value="GOC"/>
</dbReference>
<dbReference type="GO" id="GO:0005737">
    <property type="term" value="C:cytoplasm"/>
    <property type="evidence" value="ECO:0000250"/>
    <property type="project" value="UniProtKB"/>
</dbReference>
<dbReference type="GO" id="GO:0031410">
    <property type="term" value="C:cytoplasmic vesicle"/>
    <property type="evidence" value="ECO:0000250"/>
    <property type="project" value="UniProtKB"/>
</dbReference>
<dbReference type="GO" id="GO:0005829">
    <property type="term" value="C:cytosol"/>
    <property type="evidence" value="ECO:0000250"/>
    <property type="project" value="UniProtKB"/>
</dbReference>
<dbReference type="GO" id="GO:0032839">
    <property type="term" value="C:dendrite cytoplasm"/>
    <property type="evidence" value="ECO:0000250"/>
    <property type="project" value="UniProtKB"/>
</dbReference>
<dbReference type="GO" id="GO:0005615">
    <property type="term" value="C:extracellular space"/>
    <property type="evidence" value="ECO:0007669"/>
    <property type="project" value="Ensembl"/>
</dbReference>
<dbReference type="GO" id="GO:0005739">
    <property type="term" value="C:mitochondrion"/>
    <property type="evidence" value="ECO:0000250"/>
    <property type="project" value="UniProtKB"/>
</dbReference>
<dbReference type="GO" id="GO:0043025">
    <property type="term" value="C:neuronal cell body"/>
    <property type="evidence" value="ECO:0000250"/>
    <property type="project" value="UniProtKB"/>
</dbReference>
<dbReference type="GO" id="GO:0005654">
    <property type="term" value="C:nucleoplasm"/>
    <property type="evidence" value="ECO:0007669"/>
    <property type="project" value="Ensembl"/>
</dbReference>
<dbReference type="GO" id="GO:0005634">
    <property type="term" value="C:nucleus"/>
    <property type="evidence" value="ECO:0000250"/>
    <property type="project" value="UniProtKB"/>
</dbReference>
<dbReference type="GO" id="GO:0005777">
    <property type="term" value="C:peroxisome"/>
    <property type="evidence" value="ECO:0000318"/>
    <property type="project" value="GO_Central"/>
</dbReference>
<dbReference type="GO" id="GO:0005886">
    <property type="term" value="C:plasma membrane"/>
    <property type="evidence" value="ECO:0007669"/>
    <property type="project" value="Ensembl"/>
</dbReference>
<dbReference type="GO" id="GO:0032991">
    <property type="term" value="C:protein-containing complex"/>
    <property type="evidence" value="ECO:0000250"/>
    <property type="project" value="UniProtKB"/>
</dbReference>
<dbReference type="GO" id="GO:0005507">
    <property type="term" value="F:copper ion binding"/>
    <property type="evidence" value="ECO:0000250"/>
    <property type="project" value="UniProtKB"/>
</dbReference>
<dbReference type="GO" id="GO:0042803">
    <property type="term" value="F:protein homodimerization activity"/>
    <property type="evidence" value="ECO:0007669"/>
    <property type="project" value="Ensembl"/>
</dbReference>
<dbReference type="GO" id="GO:0030346">
    <property type="term" value="F:protein phosphatase 2B binding"/>
    <property type="evidence" value="ECO:0000250"/>
    <property type="project" value="UniProtKB"/>
</dbReference>
<dbReference type="GO" id="GO:0051087">
    <property type="term" value="F:protein-folding chaperone binding"/>
    <property type="evidence" value="ECO:0000250"/>
    <property type="project" value="UniProtKB"/>
</dbReference>
<dbReference type="GO" id="GO:0031267">
    <property type="term" value="F:small GTPase binding"/>
    <property type="evidence" value="ECO:0007669"/>
    <property type="project" value="Ensembl"/>
</dbReference>
<dbReference type="GO" id="GO:0004784">
    <property type="term" value="F:superoxide dismutase activity"/>
    <property type="evidence" value="ECO:0000250"/>
    <property type="project" value="UniProtKB"/>
</dbReference>
<dbReference type="GO" id="GO:0008270">
    <property type="term" value="F:zinc ion binding"/>
    <property type="evidence" value="ECO:0000250"/>
    <property type="project" value="UniProtKB"/>
</dbReference>
<dbReference type="GO" id="GO:0099610">
    <property type="term" value="P:action potential initiation"/>
    <property type="evidence" value="ECO:0007669"/>
    <property type="project" value="Ensembl"/>
</dbReference>
<dbReference type="GO" id="GO:0008089">
    <property type="term" value="P:anterograde axonal transport"/>
    <property type="evidence" value="ECO:0007669"/>
    <property type="project" value="Ensembl"/>
</dbReference>
<dbReference type="GO" id="GO:0006915">
    <property type="term" value="P:apoptotic process"/>
    <property type="evidence" value="ECO:0007669"/>
    <property type="project" value="Ensembl"/>
</dbReference>
<dbReference type="GO" id="GO:0060088">
    <property type="term" value="P:auditory receptor cell stereocilium organization"/>
    <property type="evidence" value="ECO:0000250"/>
    <property type="project" value="UniProtKB"/>
</dbReference>
<dbReference type="GO" id="GO:0008340">
    <property type="term" value="P:determination of adult lifespan"/>
    <property type="evidence" value="ECO:0007669"/>
    <property type="project" value="Ensembl"/>
</dbReference>
<dbReference type="GO" id="GO:0035234">
    <property type="term" value="P:ectopic germ cell programmed cell death"/>
    <property type="evidence" value="ECO:0007669"/>
    <property type="project" value="Ensembl"/>
</dbReference>
<dbReference type="GO" id="GO:0007566">
    <property type="term" value="P:embryo implantation"/>
    <property type="evidence" value="ECO:0000250"/>
    <property type="project" value="UniProtKB"/>
</dbReference>
<dbReference type="GO" id="GO:0010467">
    <property type="term" value="P:gene expression"/>
    <property type="evidence" value="ECO:0007669"/>
    <property type="project" value="Ensembl"/>
</dbReference>
<dbReference type="GO" id="GO:0006749">
    <property type="term" value="P:glutathione metabolic process"/>
    <property type="evidence" value="ECO:0000250"/>
    <property type="project" value="UniProtKB"/>
</dbReference>
<dbReference type="GO" id="GO:0060047">
    <property type="term" value="P:heart contraction"/>
    <property type="evidence" value="ECO:0000250"/>
    <property type="project" value="UniProtKB"/>
</dbReference>
<dbReference type="GO" id="GO:0050665">
    <property type="term" value="P:hydrogen peroxide biosynthetic process"/>
    <property type="evidence" value="ECO:0000250"/>
    <property type="project" value="UniProtKB"/>
</dbReference>
<dbReference type="GO" id="GO:0006879">
    <property type="term" value="P:intracellular iron ion homeostasis"/>
    <property type="evidence" value="ECO:0000250"/>
    <property type="project" value="UniProtKB"/>
</dbReference>
<dbReference type="GO" id="GO:0007626">
    <property type="term" value="P:locomotory behavior"/>
    <property type="evidence" value="ECO:0000250"/>
    <property type="project" value="UniProtKB"/>
</dbReference>
<dbReference type="GO" id="GO:0046716">
    <property type="term" value="P:muscle cell cellular homeostasis"/>
    <property type="evidence" value="ECO:0000250"/>
    <property type="project" value="UniProtKB"/>
</dbReference>
<dbReference type="GO" id="GO:0002262">
    <property type="term" value="P:myeloid cell homeostasis"/>
    <property type="evidence" value="ECO:0000250"/>
    <property type="project" value="UniProtKB"/>
</dbReference>
<dbReference type="GO" id="GO:0051093">
    <property type="term" value="P:negative regulation of developmental process"/>
    <property type="evidence" value="ECO:0007669"/>
    <property type="project" value="Ensembl"/>
</dbReference>
<dbReference type="GO" id="GO:0050728">
    <property type="term" value="P:negative regulation of inflammatory response"/>
    <property type="evidence" value="ECO:0007669"/>
    <property type="project" value="Ensembl"/>
</dbReference>
<dbReference type="GO" id="GO:0043524">
    <property type="term" value="P:negative regulation of neuron apoptotic process"/>
    <property type="evidence" value="ECO:0000250"/>
    <property type="project" value="UniProtKB"/>
</dbReference>
<dbReference type="GO" id="GO:2000242">
    <property type="term" value="P:negative regulation of reproductive process"/>
    <property type="evidence" value="ECO:0007669"/>
    <property type="project" value="Ensembl"/>
</dbReference>
<dbReference type="GO" id="GO:0060052">
    <property type="term" value="P:neurofilament cytoskeleton organization"/>
    <property type="evidence" value="ECO:0000250"/>
    <property type="project" value="UniProtKB"/>
</dbReference>
<dbReference type="GO" id="GO:0019228">
    <property type="term" value="P:neuronal action potential"/>
    <property type="evidence" value="ECO:0007669"/>
    <property type="project" value="Ensembl"/>
</dbReference>
<dbReference type="GO" id="GO:0001541">
    <property type="term" value="P:ovarian follicle development"/>
    <property type="evidence" value="ECO:0000250"/>
    <property type="project" value="UniProtKB"/>
</dbReference>
<dbReference type="GO" id="GO:0032287">
    <property type="term" value="P:peripheral nervous system myelin maintenance"/>
    <property type="evidence" value="ECO:0000250"/>
    <property type="project" value="UniProtKB"/>
</dbReference>
<dbReference type="GO" id="GO:0001819">
    <property type="term" value="P:positive regulation of cytokine production"/>
    <property type="evidence" value="ECO:0000250"/>
    <property type="project" value="UniProtKB"/>
</dbReference>
<dbReference type="GO" id="GO:0043410">
    <property type="term" value="P:positive regulation of MAPK cascade"/>
    <property type="evidence" value="ECO:0000250"/>
    <property type="project" value="UniProtKB"/>
</dbReference>
<dbReference type="GO" id="GO:1902177">
    <property type="term" value="P:positive regulation of oxidative stress-induced intrinsic apoptotic signaling pathway"/>
    <property type="evidence" value="ECO:0007669"/>
    <property type="project" value="Ensembl"/>
</dbReference>
<dbReference type="GO" id="GO:0050766">
    <property type="term" value="P:positive regulation of phagocytosis"/>
    <property type="evidence" value="ECO:0007669"/>
    <property type="project" value="Ensembl"/>
</dbReference>
<dbReference type="GO" id="GO:0032930">
    <property type="term" value="P:positive regulation of superoxide anion generation"/>
    <property type="evidence" value="ECO:0007669"/>
    <property type="project" value="Ensembl"/>
</dbReference>
<dbReference type="GO" id="GO:0072593">
    <property type="term" value="P:reactive oxygen species metabolic process"/>
    <property type="evidence" value="ECO:0000250"/>
    <property type="project" value="UniProtKB"/>
</dbReference>
<dbReference type="GO" id="GO:0008217">
    <property type="term" value="P:regulation of blood pressure"/>
    <property type="evidence" value="ECO:0000250"/>
    <property type="project" value="UniProtKB"/>
</dbReference>
<dbReference type="GO" id="GO:0051881">
    <property type="term" value="P:regulation of mitochondrial membrane potential"/>
    <property type="evidence" value="ECO:0000250"/>
    <property type="project" value="UniProtKB"/>
</dbReference>
<dbReference type="GO" id="GO:0040014">
    <property type="term" value="P:regulation of multicellular organism growth"/>
    <property type="evidence" value="ECO:0000250"/>
    <property type="project" value="UniProtKB"/>
</dbReference>
<dbReference type="GO" id="GO:0060087">
    <property type="term" value="P:relaxation of vascular associated smooth muscle"/>
    <property type="evidence" value="ECO:0000250"/>
    <property type="project" value="UniProtKB"/>
</dbReference>
<dbReference type="GO" id="GO:0019430">
    <property type="term" value="P:removal of superoxide radicals"/>
    <property type="evidence" value="ECO:0000250"/>
    <property type="project" value="UniProtKB"/>
</dbReference>
<dbReference type="GO" id="GO:0048678">
    <property type="term" value="P:response to axon injury"/>
    <property type="evidence" value="ECO:0000250"/>
    <property type="project" value="UniProtKB"/>
</dbReference>
<dbReference type="GO" id="GO:0045471">
    <property type="term" value="P:response to ethanol"/>
    <property type="evidence" value="ECO:0000250"/>
    <property type="project" value="UniProtKB"/>
</dbReference>
<dbReference type="GO" id="GO:0009408">
    <property type="term" value="P:response to heat"/>
    <property type="evidence" value="ECO:0000250"/>
    <property type="project" value="UniProtKB"/>
</dbReference>
<dbReference type="GO" id="GO:0042542">
    <property type="term" value="P:response to hydrogen peroxide"/>
    <property type="evidence" value="ECO:0000250"/>
    <property type="project" value="UniProtKB"/>
</dbReference>
<dbReference type="GO" id="GO:0000303">
    <property type="term" value="P:response to superoxide"/>
    <property type="evidence" value="ECO:0000250"/>
    <property type="project" value="UniProtKB"/>
</dbReference>
<dbReference type="GO" id="GO:0009410">
    <property type="term" value="P:response to xenobiotic stimulus"/>
    <property type="evidence" value="ECO:0007669"/>
    <property type="project" value="Ensembl"/>
</dbReference>
<dbReference type="GO" id="GO:0001895">
    <property type="term" value="P:retina homeostasis"/>
    <property type="evidence" value="ECO:0000250"/>
    <property type="project" value="UniProtKB"/>
</dbReference>
<dbReference type="GO" id="GO:0008090">
    <property type="term" value="P:retrograde axonal transport"/>
    <property type="evidence" value="ECO:0007669"/>
    <property type="project" value="Ensembl"/>
</dbReference>
<dbReference type="GO" id="GO:0007605">
    <property type="term" value="P:sensory perception of sound"/>
    <property type="evidence" value="ECO:0000250"/>
    <property type="project" value="UniProtKB"/>
</dbReference>
<dbReference type="GO" id="GO:0007283">
    <property type="term" value="P:spermatogenesis"/>
    <property type="evidence" value="ECO:0000250"/>
    <property type="project" value="UniProtKB"/>
</dbReference>
<dbReference type="GO" id="GO:0042554">
    <property type="term" value="P:superoxide anion generation"/>
    <property type="evidence" value="ECO:0007669"/>
    <property type="project" value="Ensembl"/>
</dbReference>
<dbReference type="GO" id="GO:0006801">
    <property type="term" value="P:superoxide metabolic process"/>
    <property type="evidence" value="ECO:0000250"/>
    <property type="project" value="UniProtKB"/>
</dbReference>
<dbReference type="GO" id="GO:0019226">
    <property type="term" value="P:transmission of nerve impulse"/>
    <property type="evidence" value="ECO:0000250"/>
    <property type="project" value="UniProtKB"/>
</dbReference>
<dbReference type="CDD" id="cd00305">
    <property type="entry name" value="Cu-Zn_Superoxide_Dismutase"/>
    <property type="match status" value="1"/>
</dbReference>
<dbReference type="FunFam" id="2.60.40.200:FF:000001">
    <property type="entry name" value="Superoxide dismutase [Cu-Zn]"/>
    <property type="match status" value="1"/>
</dbReference>
<dbReference type="Gene3D" id="2.60.40.200">
    <property type="entry name" value="Superoxide dismutase, copper/zinc binding domain"/>
    <property type="match status" value="1"/>
</dbReference>
<dbReference type="InterPro" id="IPR036423">
    <property type="entry name" value="SOD-like_Cu/Zn_dom_sf"/>
</dbReference>
<dbReference type="InterPro" id="IPR024134">
    <property type="entry name" value="SOD_Cu/Zn_/chaperone"/>
</dbReference>
<dbReference type="InterPro" id="IPR018152">
    <property type="entry name" value="SOD_Cu/Zn_BS"/>
</dbReference>
<dbReference type="InterPro" id="IPR001424">
    <property type="entry name" value="SOD_Cu_Zn_dom"/>
</dbReference>
<dbReference type="PANTHER" id="PTHR10003">
    <property type="entry name" value="SUPEROXIDE DISMUTASE CU-ZN -RELATED"/>
    <property type="match status" value="1"/>
</dbReference>
<dbReference type="Pfam" id="PF00080">
    <property type="entry name" value="Sod_Cu"/>
    <property type="match status" value="1"/>
</dbReference>
<dbReference type="PRINTS" id="PR00068">
    <property type="entry name" value="CUZNDISMTASE"/>
</dbReference>
<dbReference type="SUPFAM" id="SSF49329">
    <property type="entry name" value="Cu,Zn superoxide dismutase-like"/>
    <property type="match status" value="1"/>
</dbReference>
<dbReference type="PROSITE" id="PS00087">
    <property type="entry name" value="SOD_CU_ZN_1"/>
    <property type="match status" value="1"/>
</dbReference>
<dbReference type="PROSITE" id="PS00332">
    <property type="entry name" value="SOD_CU_ZN_2"/>
    <property type="match status" value="1"/>
</dbReference>
<accession>P60052</accession>
<reference key="1">
    <citation type="journal article" date="2002" name="Gene">
        <title>Structure, molecular evolution, and gene expression of primate superoxide dismutases.</title>
        <authorList>
            <person name="Fukuhara R."/>
            <person name="Tezuka T."/>
            <person name="Kageyama T."/>
        </authorList>
    </citation>
    <scope>NUCLEOTIDE SEQUENCE [MRNA]</scope>
</reference>
<name>SODC_PANTR</name>
<keyword id="KW-0007">Acetylation</keyword>
<keyword id="KW-0049">Antioxidant</keyword>
<keyword id="KW-0186">Copper</keyword>
<keyword id="KW-0963">Cytoplasm</keyword>
<keyword id="KW-1015">Disulfide bond</keyword>
<keyword id="KW-0449">Lipoprotein</keyword>
<keyword id="KW-0479">Metal-binding</keyword>
<keyword id="KW-0539">Nucleus</keyword>
<keyword id="KW-0560">Oxidoreductase</keyword>
<keyword id="KW-0564">Palmitate</keyword>
<keyword id="KW-0597">Phosphoprotein</keyword>
<keyword id="KW-1185">Reference proteome</keyword>
<keyword id="KW-0862">Zinc</keyword>
<gene>
    <name evidence="2" type="primary">SOD1</name>
</gene>
<proteinExistence type="evidence at transcript level"/>
<sequence length="154" mass="15936">MATKAVCVLKGDGPVQGIINFEQKESNGPVKVWGSIKGLTEGLHGFHVHEFGDNTAGCTSAGPHFNPLSRKHGGPKDEERHVGDLGNVTADKDGVADVSIEDSVISLSGDHCIIGRTLVVHEKADDLGKGGNEESTKTGNAGSRLACGVIGIAQ</sequence>
<protein>
    <recommendedName>
        <fullName evidence="2">Superoxide dismutase [Cu-Zn]</fullName>
        <ecNumber evidence="2">1.15.1.1</ecNumber>
    </recommendedName>
</protein>
<comment type="function">
    <text>Destroys radicals which are normally produced within the cells and which are toxic to biological systems.</text>
</comment>
<comment type="catalytic activity">
    <reaction>
        <text>2 superoxide + 2 H(+) = H2O2 + O2</text>
        <dbReference type="Rhea" id="RHEA:20696"/>
        <dbReference type="ChEBI" id="CHEBI:15378"/>
        <dbReference type="ChEBI" id="CHEBI:15379"/>
        <dbReference type="ChEBI" id="CHEBI:16240"/>
        <dbReference type="ChEBI" id="CHEBI:18421"/>
        <dbReference type="EC" id="1.15.1.1"/>
    </reaction>
</comment>
<comment type="cofactor">
    <cofactor evidence="1">
        <name>Cu cation</name>
        <dbReference type="ChEBI" id="CHEBI:23378"/>
    </cofactor>
    <text evidence="1">Binds 1 copper ion per subunit.</text>
</comment>
<comment type="cofactor">
    <cofactor evidence="1">
        <name>Zn(2+)</name>
        <dbReference type="ChEBI" id="CHEBI:29105"/>
    </cofactor>
    <text evidence="1">Binds 1 zinc ion per subunit.</text>
</comment>
<comment type="subunit">
    <text evidence="2 5">Homodimer; non-disulfide-linked (By similarity). Heterodimer with SOD1. The heterodimer CCS:SOD1 interacts with SLC31A1; this heterotrimer is Cu(1+)-mediated and its maintenance is regulated through SOD1 activation (By similarity).</text>
</comment>
<comment type="subcellular location">
    <subcellularLocation>
        <location evidence="1">Cytoplasm</location>
    </subcellularLocation>
    <subcellularLocation>
        <location evidence="1">Nucleus</location>
    </subcellularLocation>
</comment>
<comment type="PTM">
    <text evidence="1">Palmitoylation helps nuclear targeting and decreases catalytic activity.</text>
</comment>
<comment type="PTM">
    <text evidence="2">Succinylation, adjacent to copper catalytic site, probably inhibits activity. Desuccinylation by SIRT5 enhances activity.</text>
</comment>
<comment type="similarity">
    <text evidence="6">Belongs to the Cu-Zn superoxide dismutase family.</text>
</comment>
<organism>
    <name type="scientific">Pan troglodytes</name>
    <name type="common">Chimpanzee</name>
    <dbReference type="NCBI Taxonomy" id="9598"/>
    <lineage>
        <taxon>Eukaryota</taxon>
        <taxon>Metazoa</taxon>
        <taxon>Chordata</taxon>
        <taxon>Craniata</taxon>
        <taxon>Vertebrata</taxon>
        <taxon>Euteleostomi</taxon>
        <taxon>Mammalia</taxon>
        <taxon>Eutheria</taxon>
        <taxon>Euarchontoglires</taxon>
        <taxon>Primates</taxon>
        <taxon>Haplorrhini</taxon>
        <taxon>Catarrhini</taxon>
        <taxon>Hominidae</taxon>
        <taxon>Pan</taxon>
    </lineage>
</organism>
<feature type="initiator methionine" description="Removed" evidence="3">
    <location>
        <position position="1"/>
    </location>
</feature>
<feature type="chain" id="PRO_0000164063" description="Superoxide dismutase [Cu-Zn]">
    <location>
        <begin position="2"/>
        <end position="154"/>
    </location>
</feature>
<feature type="binding site" evidence="1">
    <location>
        <position position="47"/>
    </location>
    <ligand>
        <name>Cu cation</name>
        <dbReference type="ChEBI" id="CHEBI:23378"/>
        <note>catalytic</note>
    </ligand>
</feature>
<feature type="binding site" evidence="1">
    <location>
        <position position="49"/>
    </location>
    <ligand>
        <name>Cu cation</name>
        <dbReference type="ChEBI" id="CHEBI:23378"/>
        <note>catalytic</note>
    </ligand>
</feature>
<feature type="binding site" evidence="1">
    <location>
        <position position="64"/>
    </location>
    <ligand>
        <name>Cu cation</name>
        <dbReference type="ChEBI" id="CHEBI:23378"/>
        <note>catalytic</note>
    </ligand>
</feature>
<feature type="binding site" evidence="1">
    <location>
        <position position="64"/>
    </location>
    <ligand>
        <name>Zn(2+)</name>
        <dbReference type="ChEBI" id="CHEBI:29105"/>
        <note>structural</note>
    </ligand>
</feature>
<feature type="binding site" evidence="1">
    <location>
        <position position="72"/>
    </location>
    <ligand>
        <name>Zn(2+)</name>
        <dbReference type="ChEBI" id="CHEBI:29105"/>
        <note>structural</note>
    </ligand>
</feature>
<feature type="binding site" evidence="1">
    <location>
        <position position="81"/>
    </location>
    <ligand>
        <name>Zn(2+)</name>
        <dbReference type="ChEBI" id="CHEBI:29105"/>
        <note>structural</note>
    </ligand>
</feature>
<feature type="binding site" evidence="1">
    <location>
        <position position="84"/>
    </location>
    <ligand>
        <name>Zn(2+)</name>
        <dbReference type="ChEBI" id="CHEBI:29105"/>
        <note>structural</note>
    </ligand>
</feature>
<feature type="binding site" evidence="1">
    <location>
        <position position="121"/>
    </location>
    <ligand>
        <name>Cu cation</name>
        <dbReference type="ChEBI" id="CHEBI:23378"/>
        <note>catalytic</note>
    </ligand>
</feature>
<feature type="modified residue" description="N-acetylalanine" evidence="3">
    <location>
        <position position="2"/>
    </location>
</feature>
<feature type="modified residue" description="N6-succinyllysine" evidence="5">
    <location>
        <position position="4"/>
    </location>
</feature>
<feature type="modified residue" description="N6-succinyllysine" evidence="5">
    <location>
        <position position="10"/>
    </location>
</feature>
<feature type="modified residue" description="N6-succinyllysine" evidence="5">
    <location>
        <position position="92"/>
    </location>
</feature>
<feature type="modified residue" description="Phosphoserine" evidence="2">
    <location>
        <position position="99"/>
    </location>
</feature>
<feature type="modified residue" description="Phosphoserine" evidence="2">
    <location>
        <position position="103"/>
    </location>
</feature>
<feature type="modified residue" description="Phosphoserine" evidence="4">
    <location>
        <position position="106"/>
    </location>
</feature>
<feature type="modified residue" description="Phosphoserine" evidence="5">
    <location>
        <position position="108"/>
    </location>
</feature>
<feature type="modified residue" description="N6-acetyllysine; alternate" evidence="2">
    <location>
        <position position="123"/>
    </location>
</feature>
<feature type="modified residue" description="N6-succinyllysine; alternate" evidence="2">
    <location>
        <position position="123"/>
    </location>
</feature>
<feature type="modified residue" description="N6-acetyllysine; alternate" evidence="5">
    <location>
        <position position="137"/>
    </location>
</feature>
<feature type="modified residue" description="N6-succinyllysine; alternate" evidence="5">
    <location>
        <position position="137"/>
    </location>
</feature>
<feature type="lipid moiety-binding region" description="S-palmitoyl cysteine" evidence="1">
    <location>
        <position position="7"/>
    </location>
</feature>
<feature type="disulfide bond" evidence="1">
    <location>
        <begin position="58"/>
        <end position="147"/>
    </location>
</feature>